<reference key="1">
    <citation type="journal article" date="1998" name="J. Bacteriol.">
        <title>A putative multisubunit Na+/H+ antiporter from Staphylococcus aureus.</title>
        <authorList>
            <person name="Hiramatsu T."/>
            <person name="Kodama K."/>
            <person name="Kuroda T."/>
            <person name="Mizushima T."/>
            <person name="Tsuchiya T."/>
        </authorList>
    </citation>
    <scope>NUCLEOTIDE SEQUENCE [GENOMIC DNA]</scope>
    <scope>CHARACTERIZATION OF ANTIPORTER ACTIVITY</scope>
    <source>
        <strain>ATCC 21027 / 209-P</strain>
    </source>
</reference>
<reference key="2">
    <citation type="journal article" date="2007" name="J. Bacteriol.">
        <title>Catalytic properties of Staphylococcus aureus and Bacillus members of the secondary cation/proton antiporter-3 (Mrp) family are revealed by an optimized assay in an Escherichia coli host.</title>
        <authorList>
            <person name="Swartz T.H."/>
            <person name="Ito M."/>
            <person name="Ohira T."/>
            <person name="Natsui S."/>
            <person name="Hicks D.B."/>
            <person name="Krulwich T.A."/>
        </authorList>
    </citation>
    <scope>NUCLEOTIDE SEQUENCE [GENOMIC DNA]</scope>
    <scope>CHARACTERIZATION</scope>
    <scope>PROBABLE ELECTROGENIC ANTIPORTER ACTIVITY</scope>
    <source>
        <strain>RF4220</strain>
    </source>
</reference>
<name>MNHG1_STAAU</name>
<proteinExistence type="evidence at protein level"/>
<keyword id="KW-0050">Antiport</keyword>
<keyword id="KW-1003">Cell membrane</keyword>
<keyword id="KW-0375">Hydrogen ion transport</keyword>
<keyword id="KW-0406">Ion transport</keyword>
<keyword id="KW-0472">Membrane</keyword>
<keyword id="KW-0915">Sodium</keyword>
<keyword id="KW-0739">Sodium transport</keyword>
<keyword id="KW-0812">Transmembrane</keyword>
<keyword id="KW-1133">Transmembrane helix</keyword>
<keyword id="KW-0813">Transport</keyword>
<dbReference type="EMBL" id="AB015981">
    <property type="protein sequence ID" value="BAA35101.1"/>
    <property type="molecule type" value="Genomic_DNA"/>
</dbReference>
<dbReference type="EMBL" id="DQ659238">
    <property type="protein sequence ID" value="ABG67116.1"/>
    <property type="molecule type" value="Genomic_DNA"/>
</dbReference>
<dbReference type="PIR" id="C89861">
    <property type="entry name" value="C89861"/>
</dbReference>
<dbReference type="RefSeq" id="WP_000590451.1">
    <property type="nucleotide sequence ID" value="NZ_WYDB01000003.1"/>
</dbReference>
<dbReference type="SMR" id="P60698"/>
<dbReference type="TCDB" id="2.A.63.1.3">
    <property type="family name" value="the monovalent cation (k(+) or na(+)):proton antiporter-3 (cpa3) family"/>
</dbReference>
<dbReference type="GeneID" id="98345267"/>
<dbReference type="OMA" id="TNPISAH"/>
<dbReference type="OrthoDB" id="9806575at2"/>
<dbReference type="GO" id="GO:0005886">
    <property type="term" value="C:plasma membrane"/>
    <property type="evidence" value="ECO:0007669"/>
    <property type="project" value="UniProtKB-SubCell"/>
</dbReference>
<dbReference type="GO" id="GO:0015385">
    <property type="term" value="F:sodium:proton antiporter activity"/>
    <property type="evidence" value="ECO:0007669"/>
    <property type="project" value="TreeGrafter"/>
</dbReference>
<dbReference type="InterPro" id="IPR005133">
    <property type="entry name" value="PhaG_MnhG_YufB"/>
</dbReference>
<dbReference type="NCBIfam" id="TIGR01300">
    <property type="entry name" value="CPA3_mnhG_phaG"/>
    <property type="match status" value="1"/>
</dbReference>
<dbReference type="NCBIfam" id="NF009237">
    <property type="entry name" value="PRK12587.1"/>
    <property type="match status" value="1"/>
</dbReference>
<dbReference type="NCBIfam" id="NF009314">
    <property type="entry name" value="PRK12674.1-2"/>
    <property type="match status" value="1"/>
</dbReference>
<dbReference type="PANTHER" id="PTHR34703">
    <property type="entry name" value="ANTIPORTER SUBUNIT MNHG2-RELATED"/>
    <property type="match status" value="1"/>
</dbReference>
<dbReference type="PANTHER" id="PTHR34703:SF1">
    <property type="entry name" value="ANTIPORTER SUBUNIT MNHG2-RELATED"/>
    <property type="match status" value="1"/>
</dbReference>
<dbReference type="Pfam" id="PF03334">
    <property type="entry name" value="PhaG_MnhG_YufB"/>
    <property type="match status" value="1"/>
</dbReference>
<feature type="chain" id="PRO_0000086861" description="Na(+)/H(+) antiporter subunit G1">
    <location>
        <begin position="1"/>
        <end position="118"/>
    </location>
</feature>
<feature type="transmembrane region" description="Helical" evidence="1">
    <location>
        <begin position="7"/>
        <end position="29"/>
    </location>
</feature>
<feature type="transmembrane region" description="Helical" evidence="1">
    <location>
        <begin position="44"/>
        <end position="66"/>
    </location>
</feature>
<feature type="transmembrane region" description="Helical" evidence="1">
    <location>
        <begin position="71"/>
        <end position="90"/>
    </location>
</feature>
<gene>
    <name type="primary">mnhG1</name>
    <name type="synonym">mrpG1</name>
</gene>
<accession>P60698</accession>
<accession>Q0Q2K1</accession>
<accession>Q9ZNG0</accession>
<evidence type="ECO:0000255" key="1"/>
<evidence type="ECO:0000305" key="2"/>
<sequence>MIKIILISLALIFVIIGALISALAAIGLLRLEDVYSRAHAAGKASTLGAMSLLFGTFLYFIATQGFVNMQLIVAIIFVLITGPLSSHMIMKAAYNIKTPYTKKTKVDEISEDLKDTKL</sequence>
<organism>
    <name type="scientific">Staphylococcus aureus</name>
    <dbReference type="NCBI Taxonomy" id="1280"/>
    <lineage>
        <taxon>Bacteria</taxon>
        <taxon>Bacillati</taxon>
        <taxon>Bacillota</taxon>
        <taxon>Bacilli</taxon>
        <taxon>Bacillales</taxon>
        <taxon>Staphylococcaceae</taxon>
        <taxon>Staphylococcus</taxon>
    </lineage>
</organism>
<comment type="function">
    <text>Mnh complex is a Na(+)Li(+)/H(+) antiporter involved in Na(+) and/or Li(+) excretion. Na(+)/H(+) antiport consumes a transmembrane electrical potential, and is thus inferred to be electrogenic. Does not transport K(+), Ca(2+) or Mg(2+).</text>
</comment>
<comment type="activity regulation">
    <text>Na(+) extrusion is completely inhibited by the H(+) conductor carbonyl cyanide m-chlorophenylhydrazone (CCCP).</text>
</comment>
<comment type="subunit">
    <text>May form a heterooligomeric complex that consists of seven subunits: mnhA1, mnhB1, mnhC1, mnhD1, mnhE1, mnhF1 and mnhG1.</text>
</comment>
<comment type="subcellular location">
    <subcellularLocation>
        <location evidence="2">Cell membrane</location>
        <topology evidence="2">Multi-pass membrane protein</topology>
    </subcellularLocation>
</comment>
<comment type="similarity">
    <text evidence="2">Belongs to the CPA3 antiporters (TC 2.A.63) subunit G family.</text>
</comment>
<protein>
    <recommendedName>
        <fullName>Na(+)/H(+) antiporter subunit G1</fullName>
    </recommendedName>
    <alternativeName>
        <fullName>Mnh complex subunit G1</fullName>
    </alternativeName>
    <alternativeName>
        <fullName>Mrp complex subunit G1</fullName>
    </alternativeName>
</protein>